<accession>Q0BZQ0</accession>
<organism>
    <name type="scientific">Hyphomonas neptunium (strain ATCC 15444)</name>
    <dbReference type="NCBI Taxonomy" id="228405"/>
    <lineage>
        <taxon>Bacteria</taxon>
        <taxon>Pseudomonadati</taxon>
        <taxon>Pseudomonadota</taxon>
        <taxon>Alphaproteobacteria</taxon>
        <taxon>Hyphomonadales</taxon>
        <taxon>Hyphomonadaceae</taxon>
        <taxon>Hyphomonas</taxon>
    </lineage>
</organism>
<comment type="subcellular location">
    <subcellularLocation>
        <location evidence="1">Cell membrane</location>
        <topology evidence="1">Multi-pass membrane protein</topology>
    </subcellularLocation>
</comment>
<comment type="similarity">
    <text evidence="1">Belongs to the UPF0391 family.</text>
</comment>
<comment type="sequence caution" evidence="2">
    <conflict type="erroneous initiation">
        <sequence resource="EMBL-CDS" id="ABI76729"/>
    </conflict>
</comment>
<dbReference type="EMBL" id="CP000158">
    <property type="protein sequence ID" value="ABI76729.1"/>
    <property type="status" value="ALT_INIT"/>
    <property type="molecule type" value="Genomic_DNA"/>
</dbReference>
<dbReference type="STRING" id="228405.HNE_2348"/>
<dbReference type="KEGG" id="hne:HNE_2348"/>
<dbReference type="eggNOG" id="COG5487">
    <property type="taxonomic scope" value="Bacteria"/>
</dbReference>
<dbReference type="HOGENOM" id="CLU_187346_1_0_5"/>
<dbReference type="Proteomes" id="UP000001959">
    <property type="component" value="Chromosome"/>
</dbReference>
<dbReference type="GO" id="GO:0005886">
    <property type="term" value="C:plasma membrane"/>
    <property type="evidence" value="ECO:0007669"/>
    <property type="project" value="UniProtKB-SubCell"/>
</dbReference>
<dbReference type="HAMAP" id="MF_01361">
    <property type="entry name" value="UPF0391"/>
    <property type="match status" value="1"/>
</dbReference>
<dbReference type="InterPro" id="IPR009760">
    <property type="entry name" value="DUF1328"/>
</dbReference>
<dbReference type="NCBIfam" id="NF010226">
    <property type="entry name" value="PRK13682.1-1"/>
    <property type="match status" value="1"/>
</dbReference>
<dbReference type="NCBIfam" id="NF010228">
    <property type="entry name" value="PRK13682.1-3"/>
    <property type="match status" value="1"/>
</dbReference>
<dbReference type="NCBIfam" id="NF010229">
    <property type="entry name" value="PRK13682.1-4"/>
    <property type="match status" value="1"/>
</dbReference>
<dbReference type="Pfam" id="PF07043">
    <property type="entry name" value="DUF1328"/>
    <property type="match status" value="1"/>
</dbReference>
<dbReference type="PIRSF" id="PIRSF036466">
    <property type="entry name" value="UCP036466"/>
    <property type="match status" value="1"/>
</dbReference>
<sequence>MLGWALTFFILAIIAALLGFGGIAGAAASIAKILFFVFLALLVITFVARALRGRSIT</sequence>
<name>Y2348_HYPNA</name>
<gene>
    <name type="ordered locus">HNE_2348</name>
</gene>
<protein>
    <recommendedName>
        <fullName evidence="1">UPF0391 membrane protein HNE_2348</fullName>
    </recommendedName>
</protein>
<proteinExistence type="inferred from homology"/>
<keyword id="KW-1003">Cell membrane</keyword>
<keyword id="KW-0472">Membrane</keyword>
<keyword id="KW-1185">Reference proteome</keyword>
<keyword id="KW-0812">Transmembrane</keyword>
<keyword id="KW-1133">Transmembrane helix</keyword>
<evidence type="ECO:0000255" key="1">
    <source>
        <dbReference type="HAMAP-Rule" id="MF_01361"/>
    </source>
</evidence>
<evidence type="ECO:0000305" key="2"/>
<reference key="1">
    <citation type="journal article" date="2006" name="J. Bacteriol.">
        <title>Comparative genomic evidence for a close relationship between the dimorphic prosthecate bacteria Hyphomonas neptunium and Caulobacter crescentus.</title>
        <authorList>
            <person name="Badger J.H."/>
            <person name="Hoover T.R."/>
            <person name="Brun Y.V."/>
            <person name="Weiner R.M."/>
            <person name="Laub M.T."/>
            <person name="Alexandre G."/>
            <person name="Mrazek J."/>
            <person name="Ren Q."/>
            <person name="Paulsen I.T."/>
            <person name="Nelson K.E."/>
            <person name="Khouri H.M."/>
            <person name="Radune D."/>
            <person name="Sosa J."/>
            <person name="Dodson R.J."/>
            <person name="Sullivan S.A."/>
            <person name="Rosovitz M.J."/>
            <person name="Madupu R."/>
            <person name="Brinkac L.M."/>
            <person name="Durkin A.S."/>
            <person name="Daugherty S.C."/>
            <person name="Kothari S.P."/>
            <person name="Giglio M.G."/>
            <person name="Zhou L."/>
            <person name="Haft D.H."/>
            <person name="Selengut J.D."/>
            <person name="Davidsen T.M."/>
            <person name="Yang Q."/>
            <person name="Zafar N."/>
            <person name="Ward N.L."/>
        </authorList>
    </citation>
    <scope>NUCLEOTIDE SEQUENCE [LARGE SCALE GENOMIC DNA]</scope>
    <source>
        <strain>ATCC 15444</strain>
    </source>
</reference>
<feature type="chain" id="PRO_0000270219" description="UPF0391 membrane protein HNE_2348">
    <location>
        <begin position="1"/>
        <end position="57"/>
    </location>
</feature>
<feature type="transmembrane region" description="Helical" evidence="1">
    <location>
        <begin position="4"/>
        <end position="24"/>
    </location>
</feature>
<feature type="transmembrane region" description="Helical" evidence="1">
    <location>
        <begin position="27"/>
        <end position="47"/>
    </location>
</feature>